<dbReference type="EMBL" id="GU292889">
    <property type="protein sequence ID" value="ADB56705.1"/>
    <property type="molecule type" value="mRNA"/>
</dbReference>
<dbReference type="SMR" id="D2Y212"/>
<dbReference type="ArachnoServer" id="AS001783">
    <property type="toxin name" value="U4-theraphotoxin-Hhn1a"/>
</dbReference>
<dbReference type="GO" id="GO:0005576">
    <property type="term" value="C:extracellular region"/>
    <property type="evidence" value="ECO:0007669"/>
    <property type="project" value="UniProtKB-SubCell"/>
</dbReference>
<dbReference type="GO" id="GO:0035792">
    <property type="term" value="C:host cell postsynaptic membrane"/>
    <property type="evidence" value="ECO:0007669"/>
    <property type="project" value="UniProtKB-KW"/>
</dbReference>
<dbReference type="GO" id="GO:0090729">
    <property type="term" value="F:toxin activity"/>
    <property type="evidence" value="ECO:0007669"/>
    <property type="project" value="UniProtKB-KW"/>
</dbReference>
<dbReference type="InterPro" id="IPR012625">
    <property type="entry name" value="Hwtx-2-like"/>
</dbReference>
<dbReference type="Pfam" id="PF08089">
    <property type="entry name" value="Toxin_20"/>
    <property type="match status" value="1"/>
</dbReference>
<dbReference type="SUPFAM" id="SSF57059">
    <property type="entry name" value="omega toxin-like"/>
    <property type="match status" value="1"/>
</dbReference>
<dbReference type="PROSITE" id="PS60022">
    <property type="entry name" value="HWTX_2"/>
    <property type="match status" value="1"/>
</dbReference>
<accession>D2Y212</accession>
<organism>
    <name type="scientific">Cyriopagopus hainanus</name>
    <name type="common">Chinese bird spider</name>
    <name type="synonym">Haplopelma hainanum</name>
    <dbReference type="NCBI Taxonomy" id="209901"/>
    <lineage>
        <taxon>Eukaryota</taxon>
        <taxon>Metazoa</taxon>
        <taxon>Ecdysozoa</taxon>
        <taxon>Arthropoda</taxon>
        <taxon>Chelicerata</taxon>
        <taxon>Arachnida</taxon>
        <taxon>Araneae</taxon>
        <taxon>Mygalomorphae</taxon>
        <taxon>Theraphosidae</taxon>
        <taxon>Haplopelma</taxon>
    </lineage>
</organism>
<comment type="function">
    <text evidence="4">Neurotoxin active on both insects and mammals.</text>
</comment>
<comment type="subunit">
    <text>Monomer.</text>
</comment>
<comment type="subcellular location">
    <subcellularLocation>
        <location>Secreted</location>
    </subcellularLocation>
</comment>
<comment type="tissue specificity">
    <text>Expressed by the venom gland.</text>
</comment>
<comment type="mass spectrometry" mass="4253.38" method="MALDI" evidence="4"/>
<comment type="toxic dose">
    <text evidence="4">LD(50) is 1.41 mg/kg by intracerebroventricular injection into mice.</text>
</comment>
<comment type="toxic dose">
    <text evidence="4">PD(50) is 16 mg/kg in cockroaches.</text>
</comment>
<comment type="similarity">
    <text evidence="5">Belongs to the neurotoxin 12 (Hwtx-2) family. 02 (Hwtx-2) subfamily.</text>
</comment>
<reference key="1">
    <citation type="journal article" date="2010" name="J. Proteome Res.">
        <title>Molecular diversification of peptide toxins from the tarantula Haplopelma hainanum (Ornithoctonus hainana) venom based on transcriptomic, peptidomic, and genomic analyses.</title>
        <authorList>
            <person name="Tang X."/>
            <person name="Zhang Y."/>
            <person name="Hu W."/>
            <person name="Xu D."/>
            <person name="Tao H."/>
            <person name="Yang X."/>
            <person name="Li Y."/>
            <person name="Jiang L."/>
            <person name="Liang S."/>
        </authorList>
    </citation>
    <scope>NUCLEOTIDE SEQUENCE [LARGE SCALE MRNA]</scope>
    <scope>PROTEIN SEQUENCE OF 49-85</scope>
    <scope>IDENTIFICATION BY MASS SPECTROMETRY</scope>
    <source>
        <tissue>Venom</tissue>
        <tissue>Venom gland</tissue>
    </source>
</reference>
<reference key="2">
    <citation type="journal article" date="2010" name="Dong Wu Xue Yan Jiu">
        <title>Isolation and characterization of Hainantoxin-II, a new neurotoxic peptide from the Chinese bird spider (Haplopelma hainanum).</title>
        <authorList>
            <person name="Pan J.Y."/>
            <person name="Yu Z.Q."/>
        </authorList>
    </citation>
    <scope>PROTEIN SEQUENCE OF 49-85</scope>
    <scope>FUNCTION</scope>
    <scope>MASS SPECTROMETRY</scope>
    <scope>TOXIC DOSE</scope>
    <source>
        <tissue>Venom</tissue>
    </source>
</reference>
<sequence length="85" mass="9417">MKVTLIAILTCAAVLVLRTTAAEELEAESQLMEVGMPDTELAAVDEERLFECSVSCEIEKEGNKDCKKKKCKGGWKCKFNMCVKV</sequence>
<protein>
    <recommendedName>
        <fullName>U4-theraphotoxin-Hhn1a</fullName>
        <shortName>U4-TRTX-Hhn1a</shortName>
    </recommendedName>
    <alternativeName>
        <fullName>Hainantoxin-II.9</fullName>
        <shortName>HNTX-II.9</shortName>
    </alternativeName>
    <alternativeName>
        <fullName>Peptide F8-20.15</fullName>
    </alternativeName>
</protein>
<feature type="signal peptide" evidence="2">
    <location>
        <begin position="1"/>
        <end position="22"/>
    </location>
</feature>
<feature type="propeptide" id="PRO_0000400733" evidence="3 4">
    <location>
        <begin position="23"/>
        <end position="48"/>
    </location>
</feature>
<feature type="peptide" id="PRO_0000400734" description="U4-theraphotoxin-Hhn1a">
    <location>
        <begin position="49"/>
        <end position="85"/>
    </location>
</feature>
<feature type="disulfide bond" evidence="1">
    <location>
        <begin position="52"/>
        <end position="66"/>
    </location>
</feature>
<feature type="disulfide bond" evidence="1">
    <location>
        <begin position="56"/>
        <end position="77"/>
    </location>
</feature>
<feature type="disulfide bond" evidence="1">
    <location>
        <begin position="71"/>
        <end position="82"/>
    </location>
</feature>
<keyword id="KW-0903">Direct protein sequencing</keyword>
<keyword id="KW-1015">Disulfide bond</keyword>
<keyword id="KW-0528">Neurotoxin</keyword>
<keyword id="KW-0629">Postsynaptic neurotoxin</keyword>
<keyword id="KW-0964">Secreted</keyword>
<keyword id="KW-0732">Signal</keyword>
<keyword id="KW-0800">Toxin</keyword>
<evidence type="ECO:0000250" key="1"/>
<evidence type="ECO:0000255" key="2"/>
<evidence type="ECO:0000269" key="3">
    <source>
    </source>
</evidence>
<evidence type="ECO:0000269" key="4">
    <source>
    </source>
</evidence>
<evidence type="ECO:0000305" key="5"/>
<proteinExistence type="evidence at protein level"/>
<name>H2A09_CYRHA</name>